<keyword id="KW-0687">Ribonucleoprotein</keyword>
<keyword id="KW-0689">Ribosomal protein</keyword>
<accession>Q71YL9</accession>
<feature type="chain" id="PRO_0000167203" description="Small ribosomal subunit protein bS16">
    <location>
        <begin position="1"/>
        <end position="90"/>
    </location>
</feature>
<dbReference type="EMBL" id="AE017262">
    <property type="protein sequence ID" value="AAT04595.1"/>
    <property type="molecule type" value="Genomic_DNA"/>
</dbReference>
<dbReference type="RefSeq" id="WP_003720111.1">
    <property type="nucleotide sequence ID" value="NC_002973.6"/>
</dbReference>
<dbReference type="SMR" id="Q71YL9"/>
<dbReference type="GeneID" id="93239707"/>
<dbReference type="KEGG" id="lmf:LMOf2365_1824"/>
<dbReference type="HOGENOM" id="CLU_100590_5_0_9"/>
<dbReference type="GO" id="GO:0005737">
    <property type="term" value="C:cytoplasm"/>
    <property type="evidence" value="ECO:0007669"/>
    <property type="project" value="UniProtKB-ARBA"/>
</dbReference>
<dbReference type="GO" id="GO:0015935">
    <property type="term" value="C:small ribosomal subunit"/>
    <property type="evidence" value="ECO:0007669"/>
    <property type="project" value="TreeGrafter"/>
</dbReference>
<dbReference type="GO" id="GO:0003735">
    <property type="term" value="F:structural constituent of ribosome"/>
    <property type="evidence" value="ECO:0007669"/>
    <property type="project" value="InterPro"/>
</dbReference>
<dbReference type="GO" id="GO:0006412">
    <property type="term" value="P:translation"/>
    <property type="evidence" value="ECO:0007669"/>
    <property type="project" value="UniProtKB-UniRule"/>
</dbReference>
<dbReference type="FunFam" id="3.30.1320.10:FF:000002">
    <property type="entry name" value="30S ribosomal protein S16"/>
    <property type="match status" value="1"/>
</dbReference>
<dbReference type="Gene3D" id="3.30.1320.10">
    <property type="match status" value="1"/>
</dbReference>
<dbReference type="HAMAP" id="MF_00385">
    <property type="entry name" value="Ribosomal_bS16"/>
    <property type="match status" value="1"/>
</dbReference>
<dbReference type="InterPro" id="IPR000307">
    <property type="entry name" value="Ribosomal_bS16"/>
</dbReference>
<dbReference type="InterPro" id="IPR023803">
    <property type="entry name" value="Ribosomal_bS16_dom_sf"/>
</dbReference>
<dbReference type="NCBIfam" id="TIGR00002">
    <property type="entry name" value="S16"/>
    <property type="match status" value="1"/>
</dbReference>
<dbReference type="PANTHER" id="PTHR12919">
    <property type="entry name" value="30S RIBOSOMAL PROTEIN S16"/>
    <property type="match status" value="1"/>
</dbReference>
<dbReference type="PANTHER" id="PTHR12919:SF20">
    <property type="entry name" value="SMALL RIBOSOMAL SUBUNIT PROTEIN BS16M"/>
    <property type="match status" value="1"/>
</dbReference>
<dbReference type="Pfam" id="PF00886">
    <property type="entry name" value="Ribosomal_S16"/>
    <property type="match status" value="1"/>
</dbReference>
<dbReference type="SUPFAM" id="SSF54565">
    <property type="entry name" value="Ribosomal protein S16"/>
    <property type="match status" value="1"/>
</dbReference>
<name>RS16_LISMF</name>
<proteinExistence type="inferred from homology"/>
<evidence type="ECO:0000255" key="1">
    <source>
        <dbReference type="HAMAP-Rule" id="MF_00385"/>
    </source>
</evidence>
<evidence type="ECO:0000305" key="2"/>
<sequence>MAVKIRLKRIGSKKKPFYRIVVADSRFPRDGRSIETIGTYNPLLDPVEVKIDEEATLKWMHNGAKPSDTVRNLLSREGIMEKFHNQKLGK</sequence>
<reference key="1">
    <citation type="journal article" date="2004" name="Nucleic Acids Res.">
        <title>Whole genome comparisons of serotype 4b and 1/2a strains of the food-borne pathogen Listeria monocytogenes reveal new insights into the core genome components of this species.</title>
        <authorList>
            <person name="Nelson K.E."/>
            <person name="Fouts D.E."/>
            <person name="Mongodin E.F."/>
            <person name="Ravel J."/>
            <person name="DeBoy R.T."/>
            <person name="Kolonay J.F."/>
            <person name="Rasko D.A."/>
            <person name="Angiuoli S.V."/>
            <person name="Gill S.R."/>
            <person name="Paulsen I.T."/>
            <person name="Peterson J.D."/>
            <person name="White O."/>
            <person name="Nelson W.C."/>
            <person name="Nierman W.C."/>
            <person name="Beanan M.J."/>
            <person name="Brinkac L.M."/>
            <person name="Daugherty S.C."/>
            <person name="Dodson R.J."/>
            <person name="Durkin A.S."/>
            <person name="Madupu R."/>
            <person name="Haft D.H."/>
            <person name="Selengut J."/>
            <person name="Van Aken S.E."/>
            <person name="Khouri H.M."/>
            <person name="Fedorova N."/>
            <person name="Forberger H.A."/>
            <person name="Tran B."/>
            <person name="Kathariou S."/>
            <person name="Wonderling L.D."/>
            <person name="Uhlich G.A."/>
            <person name="Bayles D.O."/>
            <person name="Luchansky J.B."/>
            <person name="Fraser C.M."/>
        </authorList>
    </citation>
    <scope>NUCLEOTIDE SEQUENCE [LARGE SCALE GENOMIC DNA]</scope>
    <source>
        <strain>F2365</strain>
    </source>
</reference>
<gene>
    <name evidence="1" type="primary">rpsP</name>
    <name type="ordered locus">LMOf2365_1824</name>
</gene>
<protein>
    <recommendedName>
        <fullName evidence="1">Small ribosomal subunit protein bS16</fullName>
    </recommendedName>
    <alternativeName>
        <fullName evidence="2">30S ribosomal protein S16</fullName>
    </alternativeName>
</protein>
<organism>
    <name type="scientific">Listeria monocytogenes serotype 4b (strain F2365)</name>
    <dbReference type="NCBI Taxonomy" id="265669"/>
    <lineage>
        <taxon>Bacteria</taxon>
        <taxon>Bacillati</taxon>
        <taxon>Bacillota</taxon>
        <taxon>Bacilli</taxon>
        <taxon>Bacillales</taxon>
        <taxon>Listeriaceae</taxon>
        <taxon>Listeria</taxon>
    </lineage>
</organism>
<comment type="similarity">
    <text evidence="1">Belongs to the bacterial ribosomal protein bS16 family.</text>
</comment>